<proteinExistence type="inferred from homology"/>
<keyword id="KW-0067">ATP-binding</keyword>
<keyword id="KW-0963">Cytoplasm</keyword>
<keyword id="KW-0210">Decarboxylase</keyword>
<keyword id="KW-0312">Gluconeogenesis</keyword>
<keyword id="KW-0456">Lyase</keyword>
<keyword id="KW-0464">Manganese</keyword>
<keyword id="KW-0479">Metal-binding</keyword>
<keyword id="KW-0547">Nucleotide-binding</keyword>
<sequence>MRFNDITRGSGLEQHGITNPNLIYWTSPTSVLYEQVVRRGEGLISHLGALTVKTGHYTGRAANDKFIVDEPESSSRINWGKVNRPFPPESFDHLYKKMTSYMQGRDLFVQDCFAGASPEHRIPVRIITERAWHALFARNMFLRATQEELLTHNTEFTVIDLPAFHAQPKVDGTNSEAFIIINFARKLVIIGGTSYAGEIKKSIFTVLNYLLPQKGVMSMHCSANAGEKGEVAIFFGLSGTGKTTLSAAPNRLLIGDDEHGWDDAGVFNFEGGCYAKVINLSPQSEPEIYQCTRKFGTILENVAIDTISRRIDLDDASFTENTRASYPITHIPNIVGEGCGGHPNHVIMLTCDAFGVLPPIARLTPAQAMYHFLSGYTAKVAGTEAGVTEPQATFSACFGAPFMALRPSLYADLLGKKIASHKVSCWLVNTGWSGGGPGIGGRMKIAYSRALVNAALDGTLGAGSFVKDSVFGLDIPSACPGLPADILNPRNVWSDKSAYDATAHKLVEMFRHNFEQFKATTSPEIASVL</sequence>
<dbReference type="EC" id="4.1.1.49" evidence="1"/>
<dbReference type="EMBL" id="CP001661">
    <property type="protein sequence ID" value="ACT16822.1"/>
    <property type="molecule type" value="Genomic_DNA"/>
</dbReference>
<dbReference type="SMR" id="C6E0Y2"/>
<dbReference type="STRING" id="443144.GM21_0748"/>
<dbReference type="KEGG" id="gem:GM21_0748"/>
<dbReference type="eggNOG" id="COG1866">
    <property type="taxonomic scope" value="Bacteria"/>
</dbReference>
<dbReference type="HOGENOM" id="CLU_018247_0_1_7"/>
<dbReference type="OrthoDB" id="9806325at2"/>
<dbReference type="UniPathway" id="UPA00138"/>
<dbReference type="GO" id="GO:0005829">
    <property type="term" value="C:cytosol"/>
    <property type="evidence" value="ECO:0007669"/>
    <property type="project" value="TreeGrafter"/>
</dbReference>
<dbReference type="GO" id="GO:0005524">
    <property type="term" value="F:ATP binding"/>
    <property type="evidence" value="ECO:0007669"/>
    <property type="project" value="UniProtKB-UniRule"/>
</dbReference>
<dbReference type="GO" id="GO:0046872">
    <property type="term" value="F:metal ion binding"/>
    <property type="evidence" value="ECO:0007669"/>
    <property type="project" value="UniProtKB-KW"/>
</dbReference>
<dbReference type="GO" id="GO:0004612">
    <property type="term" value="F:phosphoenolpyruvate carboxykinase (ATP) activity"/>
    <property type="evidence" value="ECO:0007669"/>
    <property type="project" value="UniProtKB-UniRule"/>
</dbReference>
<dbReference type="GO" id="GO:0006094">
    <property type="term" value="P:gluconeogenesis"/>
    <property type="evidence" value="ECO:0007669"/>
    <property type="project" value="UniProtKB-UniRule"/>
</dbReference>
<dbReference type="CDD" id="cd00484">
    <property type="entry name" value="PEPCK_ATP"/>
    <property type="match status" value="1"/>
</dbReference>
<dbReference type="Gene3D" id="3.90.228.20">
    <property type="match status" value="1"/>
</dbReference>
<dbReference type="Gene3D" id="3.40.449.10">
    <property type="entry name" value="Phosphoenolpyruvate Carboxykinase, domain 1"/>
    <property type="match status" value="1"/>
</dbReference>
<dbReference type="Gene3D" id="2.170.8.10">
    <property type="entry name" value="Phosphoenolpyruvate Carboxykinase, domain 2"/>
    <property type="match status" value="1"/>
</dbReference>
<dbReference type="HAMAP" id="MF_00453">
    <property type="entry name" value="PEPCK_ATP"/>
    <property type="match status" value="1"/>
</dbReference>
<dbReference type="InterPro" id="IPR001272">
    <property type="entry name" value="PEP_carboxykinase_ATP"/>
</dbReference>
<dbReference type="InterPro" id="IPR013035">
    <property type="entry name" value="PEP_carboxykinase_C"/>
</dbReference>
<dbReference type="InterPro" id="IPR008210">
    <property type="entry name" value="PEP_carboxykinase_N"/>
</dbReference>
<dbReference type="InterPro" id="IPR015994">
    <property type="entry name" value="PEPCK_ATP_CS"/>
</dbReference>
<dbReference type="NCBIfam" id="TIGR00224">
    <property type="entry name" value="pckA"/>
    <property type="match status" value="1"/>
</dbReference>
<dbReference type="NCBIfam" id="NF006820">
    <property type="entry name" value="PRK09344.1-2"/>
    <property type="match status" value="1"/>
</dbReference>
<dbReference type="NCBIfam" id="NF006821">
    <property type="entry name" value="PRK09344.1-3"/>
    <property type="match status" value="1"/>
</dbReference>
<dbReference type="PANTHER" id="PTHR30031:SF0">
    <property type="entry name" value="PHOSPHOENOLPYRUVATE CARBOXYKINASE (ATP)"/>
    <property type="match status" value="1"/>
</dbReference>
<dbReference type="PANTHER" id="PTHR30031">
    <property type="entry name" value="PHOSPHOENOLPYRUVATE CARBOXYKINASE ATP"/>
    <property type="match status" value="1"/>
</dbReference>
<dbReference type="Pfam" id="PF01293">
    <property type="entry name" value="PEPCK_ATP"/>
    <property type="match status" value="1"/>
</dbReference>
<dbReference type="PIRSF" id="PIRSF006294">
    <property type="entry name" value="PEP_crbxkin"/>
    <property type="match status" value="1"/>
</dbReference>
<dbReference type="SUPFAM" id="SSF68923">
    <property type="entry name" value="PEP carboxykinase N-terminal domain"/>
    <property type="match status" value="1"/>
</dbReference>
<dbReference type="SUPFAM" id="SSF53795">
    <property type="entry name" value="PEP carboxykinase-like"/>
    <property type="match status" value="1"/>
</dbReference>
<dbReference type="PROSITE" id="PS00532">
    <property type="entry name" value="PEPCK_ATP"/>
    <property type="match status" value="1"/>
</dbReference>
<organism>
    <name type="scientific">Geobacter sp. (strain M21)</name>
    <dbReference type="NCBI Taxonomy" id="443144"/>
    <lineage>
        <taxon>Bacteria</taxon>
        <taxon>Pseudomonadati</taxon>
        <taxon>Thermodesulfobacteriota</taxon>
        <taxon>Desulfuromonadia</taxon>
        <taxon>Geobacterales</taxon>
        <taxon>Geobacteraceae</taxon>
        <taxon>Geobacter</taxon>
    </lineage>
</organism>
<comment type="function">
    <text evidence="1">Involved in the gluconeogenesis. Catalyzes the conversion of oxaloacetate (OAA) to phosphoenolpyruvate (PEP) through direct phosphoryl transfer between the nucleoside triphosphate and OAA.</text>
</comment>
<comment type="catalytic activity">
    <reaction evidence="1">
        <text>oxaloacetate + ATP = phosphoenolpyruvate + ADP + CO2</text>
        <dbReference type="Rhea" id="RHEA:18617"/>
        <dbReference type="ChEBI" id="CHEBI:16452"/>
        <dbReference type="ChEBI" id="CHEBI:16526"/>
        <dbReference type="ChEBI" id="CHEBI:30616"/>
        <dbReference type="ChEBI" id="CHEBI:58702"/>
        <dbReference type="ChEBI" id="CHEBI:456216"/>
        <dbReference type="EC" id="4.1.1.49"/>
    </reaction>
</comment>
<comment type="cofactor">
    <cofactor evidence="1">
        <name>Mn(2+)</name>
        <dbReference type="ChEBI" id="CHEBI:29035"/>
    </cofactor>
    <text evidence="1">Binds 1 Mn(2+) ion per subunit.</text>
</comment>
<comment type="pathway">
    <text evidence="1">Carbohydrate biosynthesis; gluconeogenesis.</text>
</comment>
<comment type="subcellular location">
    <subcellularLocation>
        <location evidence="1">Cytoplasm</location>
    </subcellularLocation>
</comment>
<comment type="similarity">
    <text evidence="1">Belongs to the phosphoenolpyruvate carboxykinase (ATP) family.</text>
</comment>
<gene>
    <name evidence="1" type="primary">pckA</name>
    <name type="ordered locus">GM21_0748</name>
</gene>
<accession>C6E0Y2</accession>
<evidence type="ECO:0000255" key="1">
    <source>
        <dbReference type="HAMAP-Rule" id="MF_00453"/>
    </source>
</evidence>
<feature type="chain" id="PRO_1000206239" description="Phosphoenolpyruvate carboxykinase (ATP)">
    <location>
        <begin position="1"/>
        <end position="529"/>
    </location>
</feature>
<feature type="binding site" evidence="1">
    <location>
        <position position="60"/>
    </location>
    <ligand>
        <name>substrate</name>
    </ligand>
</feature>
<feature type="binding site" evidence="1">
    <location>
        <position position="195"/>
    </location>
    <ligand>
        <name>substrate</name>
    </ligand>
</feature>
<feature type="binding site" evidence="1">
    <location>
        <position position="201"/>
    </location>
    <ligand>
        <name>ATP</name>
        <dbReference type="ChEBI" id="CHEBI:30616"/>
    </ligand>
</feature>
<feature type="binding site" evidence="1">
    <location>
        <position position="201"/>
    </location>
    <ligand>
        <name>Mn(2+)</name>
        <dbReference type="ChEBI" id="CHEBI:29035"/>
    </ligand>
</feature>
<feature type="binding site" evidence="1">
    <location>
        <position position="201"/>
    </location>
    <ligand>
        <name>substrate</name>
    </ligand>
</feature>
<feature type="binding site" evidence="1">
    <location>
        <position position="220"/>
    </location>
    <ligand>
        <name>ATP</name>
        <dbReference type="ChEBI" id="CHEBI:30616"/>
    </ligand>
</feature>
<feature type="binding site" evidence="1">
    <location>
        <position position="220"/>
    </location>
    <ligand>
        <name>Mn(2+)</name>
        <dbReference type="ChEBI" id="CHEBI:29035"/>
    </ligand>
</feature>
<feature type="binding site" evidence="1">
    <location>
        <begin position="236"/>
        <end position="244"/>
    </location>
    <ligand>
        <name>ATP</name>
        <dbReference type="ChEBI" id="CHEBI:30616"/>
    </ligand>
</feature>
<feature type="binding site" evidence="1">
    <location>
        <position position="257"/>
    </location>
    <ligand>
        <name>Mn(2+)</name>
        <dbReference type="ChEBI" id="CHEBI:29035"/>
    </ligand>
</feature>
<feature type="binding site" evidence="1">
    <location>
        <position position="285"/>
    </location>
    <ligand>
        <name>ATP</name>
        <dbReference type="ChEBI" id="CHEBI:30616"/>
    </ligand>
</feature>
<feature type="binding site" evidence="1">
    <location>
        <position position="323"/>
    </location>
    <ligand>
        <name>ATP</name>
        <dbReference type="ChEBI" id="CHEBI:30616"/>
    </ligand>
</feature>
<feature type="binding site" evidence="1">
    <location>
        <position position="323"/>
    </location>
    <ligand>
        <name>substrate</name>
    </ligand>
</feature>
<feature type="binding site" evidence="1">
    <location>
        <position position="448"/>
    </location>
    <ligand>
        <name>ATP</name>
        <dbReference type="ChEBI" id="CHEBI:30616"/>
    </ligand>
</feature>
<reference key="1">
    <citation type="submission" date="2009-07" db="EMBL/GenBank/DDBJ databases">
        <title>Complete sequence of Geobacter sp. M21.</title>
        <authorList>
            <consortium name="US DOE Joint Genome Institute"/>
            <person name="Lucas S."/>
            <person name="Copeland A."/>
            <person name="Lapidus A."/>
            <person name="Glavina del Rio T."/>
            <person name="Dalin E."/>
            <person name="Tice H."/>
            <person name="Bruce D."/>
            <person name="Goodwin L."/>
            <person name="Pitluck S."/>
            <person name="Saunders E."/>
            <person name="Brettin T."/>
            <person name="Detter J.C."/>
            <person name="Han C."/>
            <person name="Larimer F."/>
            <person name="Land M."/>
            <person name="Hauser L."/>
            <person name="Kyrpides N."/>
            <person name="Ovchinnikova G."/>
            <person name="Lovley D."/>
        </authorList>
    </citation>
    <scope>NUCLEOTIDE SEQUENCE [LARGE SCALE GENOMIC DNA]</scope>
    <source>
        <strain>M21</strain>
    </source>
</reference>
<name>PCKA_GEOSM</name>
<protein>
    <recommendedName>
        <fullName evidence="1">Phosphoenolpyruvate carboxykinase (ATP)</fullName>
        <shortName evidence="1">PCK</shortName>
        <shortName evidence="1">PEP carboxykinase</shortName>
        <shortName evidence="1">PEPCK</shortName>
        <ecNumber evidence="1">4.1.1.49</ecNumber>
    </recommendedName>
</protein>